<reference key="1">
    <citation type="journal article" date="2004" name="Nature">
        <title>Genome evolution in yeasts.</title>
        <authorList>
            <person name="Dujon B."/>
            <person name="Sherman D."/>
            <person name="Fischer G."/>
            <person name="Durrens P."/>
            <person name="Casaregola S."/>
            <person name="Lafontaine I."/>
            <person name="de Montigny J."/>
            <person name="Marck C."/>
            <person name="Neuveglise C."/>
            <person name="Talla E."/>
            <person name="Goffard N."/>
            <person name="Frangeul L."/>
            <person name="Aigle M."/>
            <person name="Anthouard V."/>
            <person name="Babour A."/>
            <person name="Barbe V."/>
            <person name="Barnay S."/>
            <person name="Blanchin S."/>
            <person name="Beckerich J.-M."/>
            <person name="Beyne E."/>
            <person name="Bleykasten C."/>
            <person name="Boisrame A."/>
            <person name="Boyer J."/>
            <person name="Cattolico L."/>
            <person name="Confanioleri F."/>
            <person name="de Daruvar A."/>
            <person name="Despons L."/>
            <person name="Fabre E."/>
            <person name="Fairhead C."/>
            <person name="Ferry-Dumazet H."/>
            <person name="Groppi A."/>
            <person name="Hantraye F."/>
            <person name="Hennequin C."/>
            <person name="Jauniaux N."/>
            <person name="Joyet P."/>
            <person name="Kachouri R."/>
            <person name="Kerrest A."/>
            <person name="Koszul R."/>
            <person name="Lemaire M."/>
            <person name="Lesur I."/>
            <person name="Ma L."/>
            <person name="Muller H."/>
            <person name="Nicaud J.-M."/>
            <person name="Nikolski M."/>
            <person name="Oztas S."/>
            <person name="Ozier-Kalogeropoulos O."/>
            <person name="Pellenz S."/>
            <person name="Potier S."/>
            <person name="Richard G.-F."/>
            <person name="Straub M.-L."/>
            <person name="Suleau A."/>
            <person name="Swennen D."/>
            <person name="Tekaia F."/>
            <person name="Wesolowski-Louvel M."/>
            <person name="Westhof E."/>
            <person name="Wirth B."/>
            <person name="Zeniou-Meyer M."/>
            <person name="Zivanovic Y."/>
            <person name="Bolotin-Fukuhara M."/>
            <person name="Thierry A."/>
            <person name="Bouchier C."/>
            <person name="Caudron B."/>
            <person name="Scarpelli C."/>
            <person name="Gaillardin C."/>
            <person name="Weissenbach J."/>
            <person name="Wincker P."/>
            <person name="Souciet J.-L."/>
        </authorList>
    </citation>
    <scope>NUCLEOTIDE SEQUENCE [LARGE SCALE GENOMIC DNA]</scope>
    <source>
        <strain>ATCC 8585 / CBS 2359 / DSM 70799 / NBRC 1267 / NRRL Y-1140 / WM37</strain>
    </source>
</reference>
<evidence type="ECO:0000250" key="1"/>
<evidence type="ECO:0000255" key="2"/>
<evidence type="ECO:0000256" key="3">
    <source>
        <dbReference type="SAM" id="MobiDB-lite"/>
    </source>
</evidence>
<evidence type="ECO:0000305" key="4"/>
<sequence>MSEDILTYTANTDSDDSDVEQREIEKKYKTSSETPVVQLYDGDDYDNDDIRETNGNDFPNEEDESNQLYSPVVDMNFFTLSDECTEVIICLEKNQHLLICGQFNLQIIKGGITYNNVHYNSGYKNWEFWHPACNAISPIVSSFYAGWESKLFLNREYQHFTTQIESYDCVLKISNGCNITELSSLLPELRDMWGPLNISLLPGIARKQLTFNIISKISDSVRILDISTEWSTVIDEMRIFHANSSQDMRVMVIGGKNSGKSTLMRLLVQKFLHSNNDLSYEAIHYLDIDPGQPEYSPPESISWNKVDPKSMSLGQHLCQGRFTTIKQHFIGSSSPQDWPETYSNAVESLLKEWQTENFMGTSFLNIPGWIKGFGVKIINHALDHFKPTHIIFLSYNGLPFSSEIKVPDAFSTTQRSTYKPIILQLHSPAVGKHISHALQRFNAAKIRQFKITAYLHKKYDRNFVINPLVMQKPQLTSIGNRGIVGFEFLQYSNSSLYHDDIKLSLDGTVVALHRADSTPDVLFKGIFPVMKNYSKINTEFVGLALIHSIDLEQSLIYMYIPENLFRALRETENKWVLVRGKTETPICELYPNNGIFKSEVDIPYVSLYQKKRHEHVWKVRKNVMRRGHHMK</sequence>
<comment type="function">
    <text evidence="1">Polynucleotide 5'-kinase involved in rRNA processing.</text>
</comment>
<comment type="subcellular location">
    <subcellularLocation>
        <location evidence="1">Nucleus</location>
        <location evidence="1">Nucleolus</location>
    </subcellularLocation>
</comment>
<comment type="similarity">
    <text evidence="4">Belongs to the Clp1 family. NOL9/GRC3 subfamily.</text>
</comment>
<proteinExistence type="inferred from homology"/>
<feature type="chain" id="PRO_0000087594" description="Polynucleotide 5'-hydroxyl-kinase GRC3">
    <location>
        <begin position="1"/>
        <end position="631"/>
    </location>
</feature>
<feature type="region of interest" description="Disordered" evidence="3">
    <location>
        <begin position="1"/>
        <end position="65"/>
    </location>
</feature>
<feature type="compositionally biased region" description="Basic and acidic residues" evidence="3">
    <location>
        <begin position="19"/>
        <end position="30"/>
    </location>
</feature>
<feature type="binding site" evidence="2">
    <location>
        <begin position="254"/>
        <end position="261"/>
    </location>
    <ligand>
        <name>ATP</name>
        <dbReference type="ChEBI" id="CHEBI:30616"/>
    </ligand>
</feature>
<name>GRC3_KLULA</name>
<gene>
    <name type="primary">GRC3</name>
    <name type="ordered locus">KLLA0E00748g</name>
</gene>
<keyword id="KW-0067">ATP-binding</keyword>
<keyword id="KW-0418">Kinase</keyword>
<keyword id="KW-0547">Nucleotide-binding</keyword>
<keyword id="KW-0539">Nucleus</keyword>
<keyword id="KW-1185">Reference proteome</keyword>
<keyword id="KW-0698">rRNA processing</keyword>
<keyword id="KW-0808">Transferase</keyword>
<organism>
    <name type="scientific">Kluyveromyces lactis (strain ATCC 8585 / CBS 2359 / DSM 70799 / NBRC 1267 / NRRL Y-1140 / WM37)</name>
    <name type="common">Yeast</name>
    <name type="synonym">Candida sphaerica</name>
    <dbReference type="NCBI Taxonomy" id="284590"/>
    <lineage>
        <taxon>Eukaryota</taxon>
        <taxon>Fungi</taxon>
        <taxon>Dikarya</taxon>
        <taxon>Ascomycota</taxon>
        <taxon>Saccharomycotina</taxon>
        <taxon>Saccharomycetes</taxon>
        <taxon>Saccharomycetales</taxon>
        <taxon>Saccharomycetaceae</taxon>
        <taxon>Kluyveromyces</taxon>
    </lineage>
</organism>
<accession>Q6CQ06</accession>
<dbReference type="EC" id="2.7.1.-"/>
<dbReference type="EMBL" id="CR382125">
    <property type="protein sequence ID" value="CAG99070.1"/>
    <property type="molecule type" value="Genomic_DNA"/>
</dbReference>
<dbReference type="RefSeq" id="XP_453983.1">
    <property type="nucleotide sequence ID" value="XM_453983.1"/>
</dbReference>
<dbReference type="SMR" id="Q6CQ06"/>
<dbReference type="FunCoup" id="Q6CQ06">
    <property type="interactions" value="158"/>
</dbReference>
<dbReference type="STRING" id="284590.Q6CQ06"/>
<dbReference type="PaxDb" id="284590-Q6CQ06"/>
<dbReference type="KEGG" id="kla:KLLA0_E00815g"/>
<dbReference type="eggNOG" id="KOG2750">
    <property type="taxonomic scope" value="Eukaryota"/>
</dbReference>
<dbReference type="HOGENOM" id="CLU_010345_1_1_1"/>
<dbReference type="InParanoid" id="Q6CQ06"/>
<dbReference type="OMA" id="EHVWKVR"/>
<dbReference type="Proteomes" id="UP000000598">
    <property type="component" value="Chromosome E"/>
</dbReference>
<dbReference type="GO" id="GO:0005730">
    <property type="term" value="C:nucleolus"/>
    <property type="evidence" value="ECO:0007669"/>
    <property type="project" value="UniProtKB-SubCell"/>
</dbReference>
<dbReference type="GO" id="GO:0005524">
    <property type="term" value="F:ATP binding"/>
    <property type="evidence" value="ECO:0007669"/>
    <property type="project" value="UniProtKB-KW"/>
</dbReference>
<dbReference type="GO" id="GO:0051731">
    <property type="term" value="F:polynucleotide 5'-hydroxyl-kinase activity"/>
    <property type="evidence" value="ECO:0000250"/>
    <property type="project" value="UniProtKB"/>
</dbReference>
<dbReference type="GO" id="GO:0000448">
    <property type="term" value="P:cleavage in ITS2 between 5.8S rRNA and LSU-rRNA of tricistronic rRNA transcript (SSU-rRNA, 5.8S rRNA, LSU-rRNA)"/>
    <property type="evidence" value="ECO:0007669"/>
    <property type="project" value="TreeGrafter"/>
</dbReference>
<dbReference type="GO" id="GO:0006364">
    <property type="term" value="P:rRNA processing"/>
    <property type="evidence" value="ECO:0000250"/>
    <property type="project" value="UniProtKB"/>
</dbReference>
<dbReference type="FunFam" id="3.40.50.300:FF:002306">
    <property type="entry name" value="Grc3p"/>
    <property type="match status" value="1"/>
</dbReference>
<dbReference type="Gene3D" id="3.40.50.300">
    <property type="entry name" value="P-loop containing nucleotide triphosphate hydrolases"/>
    <property type="match status" value="1"/>
</dbReference>
<dbReference type="InterPro" id="IPR045116">
    <property type="entry name" value="Clp1/Grc3"/>
</dbReference>
<dbReference type="InterPro" id="IPR032319">
    <property type="entry name" value="CLP1_P"/>
</dbReference>
<dbReference type="InterPro" id="IPR027417">
    <property type="entry name" value="P-loop_NTPase"/>
</dbReference>
<dbReference type="PANTHER" id="PTHR12755">
    <property type="entry name" value="CLEAVAGE/POLYADENYLATION FACTOR IA SUBUNIT CLP1P"/>
    <property type="match status" value="1"/>
</dbReference>
<dbReference type="PANTHER" id="PTHR12755:SF3">
    <property type="entry name" value="POLYNUCLEOTIDE 5'-HYDROXYL-KINASE NOL9"/>
    <property type="match status" value="1"/>
</dbReference>
<dbReference type="Pfam" id="PF16575">
    <property type="entry name" value="CLP1_P"/>
    <property type="match status" value="1"/>
</dbReference>
<dbReference type="SUPFAM" id="SSF52540">
    <property type="entry name" value="P-loop containing nucleoside triphosphate hydrolases"/>
    <property type="match status" value="1"/>
</dbReference>
<protein>
    <recommendedName>
        <fullName>Polynucleotide 5'-hydroxyl-kinase GRC3</fullName>
        <ecNumber>2.7.1.-</ecNumber>
    </recommendedName>
</protein>